<protein>
    <recommendedName>
        <fullName evidence="1">LPS-assembly protein LptD</fullName>
    </recommendedName>
</protein>
<dbReference type="EMBL" id="CP000469">
    <property type="protein sequence ID" value="ABK49430.1"/>
    <property type="molecule type" value="Genomic_DNA"/>
</dbReference>
<dbReference type="RefSeq" id="WP_011718027.1">
    <property type="nucleotide sequence ID" value="NC_008577.1"/>
</dbReference>
<dbReference type="SMR" id="A0L061"/>
<dbReference type="STRING" id="94122.Shewana3_3206"/>
<dbReference type="KEGG" id="shn:Shewana3_3206"/>
<dbReference type="eggNOG" id="COG1452">
    <property type="taxonomic scope" value="Bacteria"/>
</dbReference>
<dbReference type="HOGENOM" id="CLU_009039_2_0_6"/>
<dbReference type="OrthoDB" id="9760225at2"/>
<dbReference type="Proteomes" id="UP000002589">
    <property type="component" value="Chromosome"/>
</dbReference>
<dbReference type="GO" id="GO:0009279">
    <property type="term" value="C:cell outer membrane"/>
    <property type="evidence" value="ECO:0007669"/>
    <property type="project" value="UniProtKB-SubCell"/>
</dbReference>
<dbReference type="GO" id="GO:1990351">
    <property type="term" value="C:transporter complex"/>
    <property type="evidence" value="ECO:0007669"/>
    <property type="project" value="TreeGrafter"/>
</dbReference>
<dbReference type="GO" id="GO:0043165">
    <property type="term" value="P:Gram-negative-bacterium-type cell outer membrane assembly"/>
    <property type="evidence" value="ECO:0007669"/>
    <property type="project" value="UniProtKB-UniRule"/>
</dbReference>
<dbReference type="GO" id="GO:0015920">
    <property type="term" value="P:lipopolysaccharide transport"/>
    <property type="evidence" value="ECO:0007669"/>
    <property type="project" value="InterPro"/>
</dbReference>
<dbReference type="Gene3D" id="2.60.450.10">
    <property type="entry name" value="Lipopolysaccharide (LPS) transport protein A like domain"/>
    <property type="match status" value="1"/>
</dbReference>
<dbReference type="HAMAP" id="MF_01411">
    <property type="entry name" value="LPS_assembly_LptD"/>
    <property type="match status" value="1"/>
</dbReference>
<dbReference type="InterPro" id="IPR020889">
    <property type="entry name" value="LipoPS_assembly_LptD"/>
</dbReference>
<dbReference type="InterPro" id="IPR050218">
    <property type="entry name" value="LptD"/>
</dbReference>
<dbReference type="InterPro" id="IPR007543">
    <property type="entry name" value="LptD_C"/>
</dbReference>
<dbReference type="InterPro" id="IPR005653">
    <property type="entry name" value="OstA-like_N"/>
</dbReference>
<dbReference type="NCBIfam" id="NF002997">
    <property type="entry name" value="PRK03761.1"/>
    <property type="match status" value="1"/>
</dbReference>
<dbReference type="PANTHER" id="PTHR30189">
    <property type="entry name" value="LPS-ASSEMBLY PROTEIN"/>
    <property type="match status" value="1"/>
</dbReference>
<dbReference type="PANTHER" id="PTHR30189:SF1">
    <property type="entry name" value="LPS-ASSEMBLY PROTEIN LPTD"/>
    <property type="match status" value="1"/>
</dbReference>
<dbReference type="Pfam" id="PF04453">
    <property type="entry name" value="LptD"/>
    <property type="match status" value="1"/>
</dbReference>
<dbReference type="Pfam" id="PF03968">
    <property type="entry name" value="LptD_N"/>
    <property type="match status" value="1"/>
</dbReference>
<gene>
    <name evidence="1" type="primary">lptD</name>
    <name type="synonym">imp</name>
    <name type="synonym">ostA</name>
    <name type="ordered locus">Shewana3_3206</name>
</gene>
<proteinExistence type="inferred from homology"/>
<comment type="function">
    <text evidence="1">Together with LptE, is involved in the assembly of lipopolysaccharide (LPS) at the surface of the outer membrane.</text>
</comment>
<comment type="subunit">
    <text evidence="1">Component of the lipopolysaccharide transport and assembly complex. Interacts with LptE and LptA.</text>
</comment>
<comment type="subcellular location">
    <subcellularLocation>
        <location evidence="1">Cell outer membrane</location>
    </subcellularLocation>
</comment>
<comment type="similarity">
    <text evidence="1">Belongs to the LptD family.</text>
</comment>
<sequence>MQIRYFLALSLLPQVVLADESPTASASQCVIEPPVPRIVSQPGLSAADQEKIRIVSDRSNAEMGKQAIFTGDVVFSQGDRHIAADEAILDQATEQFDANGNLVFQDSIFTVTADSLQAQMRSNRATLKGAQYWLHGQQVHGDAEKLQITMNNNLILTNTNFTTCPPDNVSWLLEAEKIKINSEEEWGEIWNAKLRVADIPVFYIPYMTVPVSDKRKTGFLYPSFSTSTTNGFEVSAPYYWNIAPEYDLTFTPNYMSSRGLFTKTEFRYLAGEAQSGRLNLEYLGNDQMISGSPNRYLYNWQHQGAIDKNWRVLANFTEVSDNNYFNDLKSDVNRATDNQLSRIGEVSYFERDWDISTRVQDIKVLGEDEKPYQVMPQVNFNYRAADFWNNLDFGFNSELTNFAHQDSDMNTATRLHMAPSLTLPIHGPSGSLTSQVKLMQTNYWQEKNNSGFDGLDDTVSRTIPQVRINGQINFERFTELFDQNYRQTLEPQFQYLYVGYEDQRGIGIYDTAQLQDDYFGLFRDRRFSGLDRIADANQVTLGVTTRFFDDHNQEATKFSLGQILYLQDSKLGYEDNLFEQNQSTSVLAAELDTRLSHDWYLGAAIQYDTNSSDNKKTEVTLDFRPEANKLLQLSYRYVPDLLNSNTNDLVNISQAGVRGAWPINDSLYFVGNWYYDLNESRSIETYTGFQYESCCYAIRLSYHYRIKTNYDDNIGSAVIDEREQFESGVYLNLVIKGLGGSGPLGVSDMLNDGLFNYRKPLYLRN</sequence>
<organism>
    <name type="scientific">Shewanella sp. (strain ANA-3)</name>
    <dbReference type="NCBI Taxonomy" id="94122"/>
    <lineage>
        <taxon>Bacteria</taxon>
        <taxon>Pseudomonadati</taxon>
        <taxon>Pseudomonadota</taxon>
        <taxon>Gammaproteobacteria</taxon>
        <taxon>Alteromonadales</taxon>
        <taxon>Shewanellaceae</taxon>
        <taxon>Shewanella</taxon>
    </lineage>
</organism>
<keyword id="KW-0998">Cell outer membrane</keyword>
<keyword id="KW-0472">Membrane</keyword>
<keyword id="KW-0732">Signal</keyword>
<feature type="signal peptide" evidence="1">
    <location>
        <begin position="1"/>
        <end position="18"/>
    </location>
</feature>
<feature type="chain" id="PRO_0000281634" description="LPS-assembly protein LptD">
    <location>
        <begin position="19"/>
        <end position="765"/>
    </location>
</feature>
<reference key="1">
    <citation type="submission" date="2006-09" db="EMBL/GenBank/DDBJ databases">
        <title>Complete sequence of chromosome 1 of Shewanella sp. ANA-3.</title>
        <authorList>
            <person name="Copeland A."/>
            <person name="Lucas S."/>
            <person name="Lapidus A."/>
            <person name="Barry K."/>
            <person name="Detter J.C."/>
            <person name="Glavina del Rio T."/>
            <person name="Hammon N."/>
            <person name="Israni S."/>
            <person name="Dalin E."/>
            <person name="Tice H."/>
            <person name="Pitluck S."/>
            <person name="Chertkov O."/>
            <person name="Brettin T."/>
            <person name="Bruce D."/>
            <person name="Han C."/>
            <person name="Tapia R."/>
            <person name="Gilna P."/>
            <person name="Schmutz J."/>
            <person name="Larimer F."/>
            <person name="Land M."/>
            <person name="Hauser L."/>
            <person name="Kyrpides N."/>
            <person name="Kim E."/>
            <person name="Newman D."/>
            <person name="Salticov C."/>
            <person name="Konstantinidis K."/>
            <person name="Klappenback J."/>
            <person name="Tiedje J."/>
            <person name="Richardson P."/>
        </authorList>
    </citation>
    <scope>NUCLEOTIDE SEQUENCE [LARGE SCALE GENOMIC DNA]</scope>
    <source>
        <strain>ANA-3</strain>
    </source>
</reference>
<evidence type="ECO:0000255" key="1">
    <source>
        <dbReference type="HAMAP-Rule" id="MF_01411"/>
    </source>
</evidence>
<accession>A0L061</accession>
<name>LPTD_SHESA</name>